<sequence>MNKLSVVILAAGKGTRMYSDLPKVLHKIAGKPMVKHVIDTAKKLSAAQIHLIYGHGADLLKQHLADEPVNWVFQSEQLGTGHAMQQAVPFFQDDENIVMLYGDVPLISKETLECLISQKPENGIALLTVNLDNPTGYGRVIRENGTVTAIVEQKDANPEQLKITEVNTGVMVSDGASFRKWLARLDNNNAQGEYYMTDVIGLANQDGFKVVAVQAKDLMEVEGVNNRLQLANLERHYQRKQVEKLLLAGVTFADPARFDLRGELTHGKDVEIDINVIIEGTVRLGNNVFIGAGCVLKNCTIADNVEIKPYSVIEDAIVGNNAKIGPFSRLRPGAELSENTHVGNFVEIKKAQIGKGSKVNHLTYIGDAEVGHHCNIGAGVITCNYDGANKFKTLIGDNVFVGSDSQLVAPLTIASGATIGAGTTVTKDVQENELVITRVPQRHISNWQRPKRK</sequence>
<reference key="1">
    <citation type="submission" date="2008-02" db="EMBL/GenBank/DDBJ databases">
        <title>Complete sequence of Haemophilus somnus 2336.</title>
        <authorList>
            <consortium name="US DOE Joint Genome Institute"/>
            <person name="Siddaramappa S."/>
            <person name="Duncan A.J."/>
            <person name="Challacombe J.F."/>
            <person name="Rainey D."/>
            <person name="Gillaspy A.F."/>
            <person name="Carson M."/>
            <person name="Gipson J."/>
            <person name="Gipson M."/>
            <person name="Bruce D."/>
            <person name="Detter J.C."/>
            <person name="Han C.S."/>
            <person name="Land M."/>
            <person name="Tapia R."/>
            <person name="Thompson L.S."/>
            <person name="Orvis J."/>
            <person name="Zaitshik J."/>
            <person name="Barnes G."/>
            <person name="Brettin T.S."/>
            <person name="Dyer D.W."/>
            <person name="Inzana T.J."/>
        </authorList>
    </citation>
    <scope>NUCLEOTIDE SEQUENCE [LARGE SCALE GENOMIC DNA]</scope>
    <source>
        <strain>2336</strain>
    </source>
</reference>
<feature type="chain" id="PRO_0000337723" description="Bifunctional protein GlmU">
    <location>
        <begin position="1"/>
        <end position="453"/>
    </location>
</feature>
<feature type="region of interest" description="Pyrophosphorylase" evidence="1">
    <location>
        <begin position="1"/>
        <end position="227"/>
    </location>
</feature>
<feature type="region of interest" description="Linker" evidence="1">
    <location>
        <begin position="228"/>
        <end position="248"/>
    </location>
</feature>
<feature type="region of interest" description="N-acetyltransferase" evidence="1">
    <location>
        <begin position="249"/>
        <end position="453"/>
    </location>
</feature>
<feature type="active site" description="Proton acceptor" evidence="1">
    <location>
        <position position="361"/>
    </location>
</feature>
<feature type="binding site" evidence="1">
    <location>
        <begin position="9"/>
        <end position="12"/>
    </location>
    <ligand>
        <name>UDP-N-acetyl-alpha-D-glucosamine</name>
        <dbReference type="ChEBI" id="CHEBI:57705"/>
    </ligand>
</feature>
<feature type="binding site" evidence="1">
    <location>
        <position position="23"/>
    </location>
    <ligand>
        <name>UDP-N-acetyl-alpha-D-glucosamine</name>
        <dbReference type="ChEBI" id="CHEBI:57705"/>
    </ligand>
</feature>
<feature type="binding site" evidence="1">
    <location>
        <position position="74"/>
    </location>
    <ligand>
        <name>UDP-N-acetyl-alpha-D-glucosamine</name>
        <dbReference type="ChEBI" id="CHEBI:57705"/>
    </ligand>
</feature>
<feature type="binding site" evidence="1">
    <location>
        <begin position="79"/>
        <end position="80"/>
    </location>
    <ligand>
        <name>UDP-N-acetyl-alpha-D-glucosamine</name>
        <dbReference type="ChEBI" id="CHEBI:57705"/>
    </ligand>
</feature>
<feature type="binding site" evidence="1">
    <location>
        <begin position="101"/>
        <end position="103"/>
    </location>
    <ligand>
        <name>UDP-N-acetyl-alpha-D-glucosamine</name>
        <dbReference type="ChEBI" id="CHEBI:57705"/>
    </ligand>
</feature>
<feature type="binding site" evidence="1">
    <location>
        <position position="103"/>
    </location>
    <ligand>
        <name>Mg(2+)</name>
        <dbReference type="ChEBI" id="CHEBI:18420"/>
    </ligand>
</feature>
<feature type="binding site" evidence="1">
    <location>
        <position position="138"/>
    </location>
    <ligand>
        <name>UDP-N-acetyl-alpha-D-glucosamine</name>
        <dbReference type="ChEBI" id="CHEBI:57705"/>
    </ligand>
</feature>
<feature type="binding site" evidence="1">
    <location>
        <position position="152"/>
    </location>
    <ligand>
        <name>UDP-N-acetyl-alpha-D-glucosamine</name>
        <dbReference type="ChEBI" id="CHEBI:57705"/>
    </ligand>
</feature>
<feature type="binding site" evidence="1">
    <location>
        <position position="167"/>
    </location>
    <ligand>
        <name>UDP-N-acetyl-alpha-D-glucosamine</name>
        <dbReference type="ChEBI" id="CHEBI:57705"/>
    </ligand>
</feature>
<feature type="binding site" evidence="1">
    <location>
        <position position="225"/>
    </location>
    <ligand>
        <name>Mg(2+)</name>
        <dbReference type="ChEBI" id="CHEBI:18420"/>
    </ligand>
</feature>
<feature type="binding site" evidence="1">
    <location>
        <position position="225"/>
    </location>
    <ligand>
        <name>UDP-N-acetyl-alpha-D-glucosamine</name>
        <dbReference type="ChEBI" id="CHEBI:57705"/>
    </ligand>
</feature>
<feature type="binding site" evidence="1">
    <location>
        <position position="331"/>
    </location>
    <ligand>
        <name>UDP-N-acetyl-alpha-D-glucosamine</name>
        <dbReference type="ChEBI" id="CHEBI:57705"/>
    </ligand>
</feature>
<feature type="binding site" evidence="1">
    <location>
        <position position="349"/>
    </location>
    <ligand>
        <name>UDP-N-acetyl-alpha-D-glucosamine</name>
        <dbReference type="ChEBI" id="CHEBI:57705"/>
    </ligand>
</feature>
<feature type="binding site" evidence="1">
    <location>
        <position position="364"/>
    </location>
    <ligand>
        <name>UDP-N-acetyl-alpha-D-glucosamine</name>
        <dbReference type="ChEBI" id="CHEBI:57705"/>
    </ligand>
</feature>
<feature type="binding site" evidence="1">
    <location>
        <position position="375"/>
    </location>
    <ligand>
        <name>UDP-N-acetyl-alpha-D-glucosamine</name>
        <dbReference type="ChEBI" id="CHEBI:57705"/>
    </ligand>
</feature>
<feature type="binding site" evidence="1">
    <location>
        <position position="378"/>
    </location>
    <ligand>
        <name>acetyl-CoA</name>
        <dbReference type="ChEBI" id="CHEBI:57288"/>
    </ligand>
</feature>
<feature type="binding site" evidence="1">
    <location>
        <begin position="384"/>
        <end position="385"/>
    </location>
    <ligand>
        <name>acetyl-CoA</name>
        <dbReference type="ChEBI" id="CHEBI:57288"/>
    </ligand>
</feature>
<feature type="binding site" evidence="1">
    <location>
        <position position="403"/>
    </location>
    <ligand>
        <name>acetyl-CoA</name>
        <dbReference type="ChEBI" id="CHEBI:57288"/>
    </ligand>
</feature>
<feature type="binding site" evidence="1">
    <location>
        <position position="421"/>
    </location>
    <ligand>
        <name>acetyl-CoA</name>
        <dbReference type="ChEBI" id="CHEBI:57288"/>
    </ligand>
</feature>
<feature type="binding site" evidence="1">
    <location>
        <position position="438"/>
    </location>
    <ligand>
        <name>acetyl-CoA</name>
        <dbReference type="ChEBI" id="CHEBI:57288"/>
    </ligand>
</feature>
<evidence type="ECO:0000255" key="1">
    <source>
        <dbReference type="HAMAP-Rule" id="MF_01631"/>
    </source>
</evidence>
<evidence type="ECO:0000305" key="2"/>
<comment type="function">
    <text evidence="1">Catalyzes the last two sequential reactions in the de novo biosynthetic pathway for UDP-N-acetylglucosamine (UDP-GlcNAc). The C-terminal domain catalyzes the transfer of acetyl group from acetyl coenzyme A to glucosamine-1-phosphate (GlcN-1-P) to produce N-acetylglucosamine-1-phosphate (GlcNAc-1-P), which is converted into UDP-GlcNAc by the transfer of uridine 5-monophosphate (from uridine 5-triphosphate), a reaction catalyzed by the N-terminal domain.</text>
</comment>
<comment type="catalytic activity">
    <reaction evidence="1">
        <text>alpha-D-glucosamine 1-phosphate + acetyl-CoA = N-acetyl-alpha-D-glucosamine 1-phosphate + CoA + H(+)</text>
        <dbReference type="Rhea" id="RHEA:13725"/>
        <dbReference type="ChEBI" id="CHEBI:15378"/>
        <dbReference type="ChEBI" id="CHEBI:57287"/>
        <dbReference type="ChEBI" id="CHEBI:57288"/>
        <dbReference type="ChEBI" id="CHEBI:57776"/>
        <dbReference type="ChEBI" id="CHEBI:58516"/>
        <dbReference type="EC" id="2.3.1.157"/>
    </reaction>
</comment>
<comment type="catalytic activity">
    <reaction evidence="1">
        <text>N-acetyl-alpha-D-glucosamine 1-phosphate + UTP + H(+) = UDP-N-acetyl-alpha-D-glucosamine + diphosphate</text>
        <dbReference type="Rhea" id="RHEA:13509"/>
        <dbReference type="ChEBI" id="CHEBI:15378"/>
        <dbReference type="ChEBI" id="CHEBI:33019"/>
        <dbReference type="ChEBI" id="CHEBI:46398"/>
        <dbReference type="ChEBI" id="CHEBI:57705"/>
        <dbReference type="ChEBI" id="CHEBI:57776"/>
        <dbReference type="EC" id="2.7.7.23"/>
    </reaction>
</comment>
<comment type="cofactor">
    <cofactor evidence="1">
        <name>Mg(2+)</name>
        <dbReference type="ChEBI" id="CHEBI:18420"/>
    </cofactor>
    <text evidence="1">Binds 1 Mg(2+) ion per subunit.</text>
</comment>
<comment type="pathway">
    <text evidence="1">Nucleotide-sugar biosynthesis; UDP-N-acetyl-alpha-D-glucosamine biosynthesis; N-acetyl-alpha-D-glucosamine 1-phosphate from alpha-D-glucosamine 6-phosphate (route II): step 2/2.</text>
</comment>
<comment type="pathway">
    <text evidence="1">Nucleotide-sugar biosynthesis; UDP-N-acetyl-alpha-D-glucosamine biosynthesis; UDP-N-acetyl-alpha-D-glucosamine from N-acetyl-alpha-D-glucosamine 1-phosphate: step 1/1.</text>
</comment>
<comment type="pathway">
    <text evidence="1">Bacterial outer membrane biogenesis; LPS lipid A biosynthesis.</text>
</comment>
<comment type="subunit">
    <text evidence="1">Homotrimer.</text>
</comment>
<comment type="subcellular location">
    <subcellularLocation>
        <location evidence="1">Cytoplasm</location>
    </subcellularLocation>
</comment>
<comment type="similarity">
    <text evidence="1">In the N-terminal section; belongs to the N-acetylglucosamine-1-phosphate uridyltransferase family.</text>
</comment>
<comment type="similarity">
    <text evidence="1">In the C-terminal section; belongs to the transferase hexapeptide repeat family.</text>
</comment>
<comment type="sequence caution" evidence="2">
    <conflict type="erroneous initiation">
        <sequence resource="EMBL-CDS" id="ACA31826"/>
    </conflict>
</comment>
<name>GLMU_HISS2</name>
<protein>
    <recommendedName>
        <fullName evidence="1">Bifunctional protein GlmU</fullName>
    </recommendedName>
    <domain>
        <recommendedName>
            <fullName evidence="1">UDP-N-acetylglucosamine pyrophosphorylase</fullName>
            <ecNumber evidence="1">2.7.7.23</ecNumber>
        </recommendedName>
        <alternativeName>
            <fullName evidence="1">N-acetylglucosamine-1-phosphate uridyltransferase</fullName>
        </alternativeName>
    </domain>
    <domain>
        <recommendedName>
            <fullName evidence="1">Glucosamine-1-phosphate N-acetyltransferase</fullName>
            <ecNumber evidence="1">2.3.1.157</ecNumber>
        </recommendedName>
    </domain>
</protein>
<gene>
    <name evidence="1" type="primary">glmU</name>
    <name type="ordered locus">HSM_0204</name>
</gene>
<keyword id="KW-0012">Acyltransferase</keyword>
<keyword id="KW-0133">Cell shape</keyword>
<keyword id="KW-0961">Cell wall biogenesis/degradation</keyword>
<keyword id="KW-0963">Cytoplasm</keyword>
<keyword id="KW-0460">Magnesium</keyword>
<keyword id="KW-0479">Metal-binding</keyword>
<keyword id="KW-0511">Multifunctional enzyme</keyword>
<keyword id="KW-0548">Nucleotidyltransferase</keyword>
<keyword id="KW-0573">Peptidoglycan synthesis</keyword>
<keyword id="KW-0677">Repeat</keyword>
<keyword id="KW-0808">Transferase</keyword>
<accession>B0UW09</accession>
<dbReference type="EC" id="2.7.7.23" evidence="1"/>
<dbReference type="EC" id="2.3.1.157" evidence="1"/>
<dbReference type="EMBL" id="CP000947">
    <property type="protein sequence ID" value="ACA31826.1"/>
    <property type="status" value="ALT_INIT"/>
    <property type="molecule type" value="Genomic_DNA"/>
</dbReference>
<dbReference type="RefSeq" id="WP_041604967.1">
    <property type="nucleotide sequence ID" value="NC_010519.1"/>
</dbReference>
<dbReference type="SMR" id="B0UW09"/>
<dbReference type="STRING" id="228400.HSM_0204"/>
<dbReference type="GeneID" id="31486482"/>
<dbReference type="KEGG" id="hsm:HSM_0204"/>
<dbReference type="HOGENOM" id="CLU_029499_15_2_6"/>
<dbReference type="UniPathway" id="UPA00113">
    <property type="reaction ID" value="UER00532"/>
</dbReference>
<dbReference type="UniPathway" id="UPA00113">
    <property type="reaction ID" value="UER00533"/>
</dbReference>
<dbReference type="UniPathway" id="UPA00973"/>
<dbReference type="GO" id="GO:0005737">
    <property type="term" value="C:cytoplasm"/>
    <property type="evidence" value="ECO:0007669"/>
    <property type="project" value="UniProtKB-SubCell"/>
</dbReference>
<dbReference type="GO" id="GO:0016020">
    <property type="term" value="C:membrane"/>
    <property type="evidence" value="ECO:0007669"/>
    <property type="project" value="GOC"/>
</dbReference>
<dbReference type="GO" id="GO:0019134">
    <property type="term" value="F:glucosamine-1-phosphate N-acetyltransferase activity"/>
    <property type="evidence" value="ECO:0007669"/>
    <property type="project" value="UniProtKB-UniRule"/>
</dbReference>
<dbReference type="GO" id="GO:0000287">
    <property type="term" value="F:magnesium ion binding"/>
    <property type="evidence" value="ECO:0007669"/>
    <property type="project" value="UniProtKB-UniRule"/>
</dbReference>
<dbReference type="GO" id="GO:0003977">
    <property type="term" value="F:UDP-N-acetylglucosamine diphosphorylase activity"/>
    <property type="evidence" value="ECO:0007669"/>
    <property type="project" value="UniProtKB-UniRule"/>
</dbReference>
<dbReference type="GO" id="GO:0000902">
    <property type="term" value="P:cell morphogenesis"/>
    <property type="evidence" value="ECO:0007669"/>
    <property type="project" value="UniProtKB-UniRule"/>
</dbReference>
<dbReference type="GO" id="GO:0071555">
    <property type="term" value="P:cell wall organization"/>
    <property type="evidence" value="ECO:0007669"/>
    <property type="project" value="UniProtKB-KW"/>
</dbReference>
<dbReference type="GO" id="GO:0009245">
    <property type="term" value="P:lipid A biosynthetic process"/>
    <property type="evidence" value="ECO:0007669"/>
    <property type="project" value="UniProtKB-UniRule"/>
</dbReference>
<dbReference type="GO" id="GO:0009252">
    <property type="term" value="P:peptidoglycan biosynthetic process"/>
    <property type="evidence" value="ECO:0007669"/>
    <property type="project" value="UniProtKB-UniRule"/>
</dbReference>
<dbReference type="GO" id="GO:0008360">
    <property type="term" value="P:regulation of cell shape"/>
    <property type="evidence" value="ECO:0007669"/>
    <property type="project" value="UniProtKB-KW"/>
</dbReference>
<dbReference type="GO" id="GO:0006048">
    <property type="term" value="P:UDP-N-acetylglucosamine biosynthetic process"/>
    <property type="evidence" value="ECO:0007669"/>
    <property type="project" value="UniProtKB-UniPathway"/>
</dbReference>
<dbReference type="CDD" id="cd02540">
    <property type="entry name" value="GT2_GlmU_N_bac"/>
    <property type="match status" value="1"/>
</dbReference>
<dbReference type="CDD" id="cd03353">
    <property type="entry name" value="LbH_GlmU_C"/>
    <property type="match status" value="1"/>
</dbReference>
<dbReference type="FunFam" id="3.90.550.10:FF:000006">
    <property type="entry name" value="Bifunctional protein GlmU"/>
    <property type="match status" value="1"/>
</dbReference>
<dbReference type="Gene3D" id="2.160.10.10">
    <property type="entry name" value="Hexapeptide repeat proteins"/>
    <property type="match status" value="1"/>
</dbReference>
<dbReference type="Gene3D" id="3.90.550.10">
    <property type="entry name" value="Spore Coat Polysaccharide Biosynthesis Protein SpsA, Chain A"/>
    <property type="match status" value="1"/>
</dbReference>
<dbReference type="HAMAP" id="MF_01631">
    <property type="entry name" value="GlmU"/>
    <property type="match status" value="1"/>
</dbReference>
<dbReference type="InterPro" id="IPR005882">
    <property type="entry name" value="Bifunctional_GlmU"/>
</dbReference>
<dbReference type="InterPro" id="IPR050065">
    <property type="entry name" value="GlmU-like"/>
</dbReference>
<dbReference type="InterPro" id="IPR038009">
    <property type="entry name" value="GlmU_C_LbH"/>
</dbReference>
<dbReference type="InterPro" id="IPR001451">
    <property type="entry name" value="Hexapep"/>
</dbReference>
<dbReference type="InterPro" id="IPR018357">
    <property type="entry name" value="Hexapep_transf_CS"/>
</dbReference>
<dbReference type="InterPro" id="IPR025877">
    <property type="entry name" value="MobA-like_NTP_Trfase"/>
</dbReference>
<dbReference type="InterPro" id="IPR029044">
    <property type="entry name" value="Nucleotide-diphossugar_trans"/>
</dbReference>
<dbReference type="InterPro" id="IPR011004">
    <property type="entry name" value="Trimer_LpxA-like_sf"/>
</dbReference>
<dbReference type="NCBIfam" id="TIGR01173">
    <property type="entry name" value="glmU"/>
    <property type="match status" value="1"/>
</dbReference>
<dbReference type="NCBIfam" id="NF006986">
    <property type="entry name" value="PRK09451.1"/>
    <property type="match status" value="1"/>
</dbReference>
<dbReference type="PANTHER" id="PTHR43584:SF3">
    <property type="entry name" value="BIFUNCTIONAL PROTEIN GLMU"/>
    <property type="match status" value="1"/>
</dbReference>
<dbReference type="PANTHER" id="PTHR43584">
    <property type="entry name" value="NUCLEOTIDYL TRANSFERASE"/>
    <property type="match status" value="1"/>
</dbReference>
<dbReference type="Pfam" id="PF00132">
    <property type="entry name" value="Hexapep"/>
    <property type="match status" value="3"/>
</dbReference>
<dbReference type="Pfam" id="PF12804">
    <property type="entry name" value="NTP_transf_3"/>
    <property type="match status" value="1"/>
</dbReference>
<dbReference type="SUPFAM" id="SSF53448">
    <property type="entry name" value="Nucleotide-diphospho-sugar transferases"/>
    <property type="match status" value="1"/>
</dbReference>
<dbReference type="SUPFAM" id="SSF51161">
    <property type="entry name" value="Trimeric LpxA-like enzymes"/>
    <property type="match status" value="1"/>
</dbReference>
<dbReference type="PROSITE" id="PS00101">
    <property type="entry name" value="HEXAPEP_TRANSFERASES"/>
    <property type="match status" value="1"/>
</dbReference>
<proteinExistence type="inferred from homology"/>
<organism>
    <name type="scientific">Histophilus somni (strain 2336)</name>
    <name type="common">Haemophilus somnus</name>
    <dbReference type="NCBI Taxonomy" id="228400"/>
    <lineage>
        <taxon>Bacteria</taxon>
        <taxon>Pseudomonadati</taxon>
        <taxon>Pseudomonadota</taxon>
        <taxon>Gammaproteobacteria</taxon>
        <taxon>Pasteurellales</taxon>
        <taxon>Pasteurellaceae</taxon>
        <taxon>Histophilus</taxon>
    </lineage>
</organism>